<dbReference type="EC" id="1.14.11.-"/>
<dbReference type="EMBL" id="BC124503">
    <property type="protein sequence ID" value="AAI24504.1"/>
    <property type="molecule type" value="mRNA"/>
</dbReference>
<dbReference type="RefSeq" id="NP_001070096.1">
    <property type="nucleotide sequence ID" value="NM_001076628.1"/>
</dbReference>
<dbReference type="SMR" id="Q08BY5"/>
<dbReference type="FunCoup" id="Q08BY5">
    <property type="interactions" value="1610"/>
</dbReference>
<dbReference type="STRING" id="7955.ENSDARP00000096160"/>
<dbReference type="PaxDb" id="7955-ENSDARP00000096160"/>
<dbReference type="Ensembl" id="ENSDART00000105387">
    <property type="protein sequence ID" value="ENSDARP00000096160"/>
    <property type="gene ID" value="ENSDARG00000058995"/>
</dbReference>
<dbReference type="GeneID" id="767690"/>
<dbReference type="KEGG" id="dre:767690"/>
<dbReference type="AGR" id="ZFIN:ZDB-GENE-060929-636"/>
<dbReference type="CTD" id="65094"/>
<dbReference type="ZFIN" id="ZDB-GENE-060929-636">
    <property type="gene designation" value="jmjd4"/>
</dbReference>
<dbReference type="eggNOG" id="KOG2131">
    <property type="taxonomic scope" value="Eukaryota"/>
</dbReference>
<dbReference type="HOGENOM" id="CLU_016785_2_2_1"/>
<dbReference type="InParanoid" id="Q08BY5"/>
<dbReference type="OMA" id="HPCMFSR"/>
<dbReference type="OrthoDB" id="203487at2759"/>
<dbReference type="PhylomeDB" id="Q08BY5"/>
<dbReference type="TreeFam" id="TF105936"/>
<dbReference type="Reactome" id="R-DRE-9629569">
    <property type="pathway name" value="Protein hydroxylation"/>
</dbReference>
<dbReference type="PRO" id="PR:Q08BY5"/>
<dbReference type="Proteomes" id="UP000000437">
    <property type="component" value="Chromosome 2"/>
</dbReference>
<dbReference type="Bgee" id="ENSDARG00000058995">
    <property type="expression patterns" value="Expressed in mature ovarian follicle and 21 other cell types or tissues"/>
</dbReference>
<dbReference type="GO" id="GO:0005737">
    <property type="term" value="C:cytoplasm"/>
    <property type="evidence" value="ECO:0000250"/>
    <property type="project" value="UniProtKB"/>
</dbReference>
<dbReference type="GO" id="GO:0005634">
    <property type="term" value="C:nucleus"/>
    <property type="evidence" value="ECO:0000318"/>
    <property type="project" value="GO_Central"/>
</dbReference>
<dbReference type="GO" id="GO:0016706">
    <property type="term" value="F:2-oxoglutarate-dependent dioxygenase activity"/>
    <property type="evidence" value="ECO:0000250"/>
    <property type="project" value="UniProtKB"/>
</dbReference>
<dbReference type="GO" id="GO:0046872">
    <property type="term" value="F:metal ion binding"/>
    <property type="evidence" value="ECO:0007669"/>
    <property type="project" value="UniProtKB-KW"/>
</dbReference>
<dbReference type="GO" id="GO:0106156">
    <property type="term" value="F:peptidyl-lysine 4-dioxygenase activity"/>
    <property type="evidence" value="ECO:0007669"/>
    <property type="project" value="RHEA"/>
</dbReference>
<dbReference type="GO" id="GO:0043565">
    <property type="term" value="F:sequence-specific DNA binding"/>
    <property type="evidence" value="ECO:0000318"/>
    <property type="project" value="GO_Central"/>
</dbReference>
<dbReference type="GO" id="GO:0045905">
    <property type="term" value="P:positive regulation of translational termination"/>
    <property type="evidence" value="ECO:0000250"/>
    <property type="project" value="UniProtKB"/>
</dbReference>
<dbReference type="GO" id="GO:0018126">
    <property type="term" value="P:protein hydroxylation"/>
    <property type="evidence" value="ECO:0000250"/>
    <property type="project" value="UniProtKB"/>
</dbReference>
<dbReference type="FunFam" id="2.60.120.650:FF:000030">
    <property type="entry name" value="JmjC domain-containing protein 4"/>
    <property type="match status" value="1"/>
</dbReference>
<dbReference type="Gene3D" id="2.60.120.650">
    <property type="entry name" value="Cupin"/>
    <property type="match status" value="1"/>
</dbReference>
<dbReference type="InterPro" id="IPR041667">
    <property type="entry name" value="Cupin_8"/>
</dbReference>
<dbReference type="InterPro" id="IPR003347">
    <property type="entry name" value="JmjC_dom"/>
</dbReference>
<dbReference type="InterPro" id="IPR050910">
    <property type="entry name" value="JMJD6_ArgDemeth/LysHydrox"/>
</dbReference>
<dbReference type="PANTHER" id="PTHR12480:SF6">
    <property type="entry name" value="2-OXOGLUTARATE AND IRON-DEPENDENT OXYGENASE JMJD4"/>
    <property type="match status" value="1"/>
</dbReference>
<dbReference type="PANTHER" id="PTHR12480">
    <property type="entry name" value="ARGININE DEMETHYLASE AND LYSYL-HYDROXYLASE JMJD"/>
    <property type="match status" value="1"/>
</dbReference>
<dbReference type="Pfam" id="PF13621">
    <property type="entry name" value="Cupin_8"/>
    <property type="match status" value="1"/>
</dbReference>
<dbReference type="SMART" id="SM00558">
    <property type="entry name" value="JmjC"/>
    <property type="match status" value="1"/>
</dbReference>
<dbReference type="SUPFAM" id="SSF51197">
    <property type="entry name" value="Clavaminate synthase-like"/>
    <property type="match status" value="1"/>
</dbReference>
<dbReference type="PROSITE" id="PS51184">
    <property type="entry name" value="JMJC"/>
    <property type="match status" value="1"/>
</dbReference>
<gene>
    <name type="primary">jmjd4</name>
    <name type="ORF">zgc:153974</name>
</gene>
<proteinExistence type="evidence at transcript level"/>
<name>JMJD4_DANRE</name>
<accession>Q08BY5</accession>
<evidence type="ECO:0000250" key="1">
    <source>
        <dbReference type="UniProtKB" id="Q6NYC1"/>
    </source>
</evidence>
<evidence type="ECO:0000250" key="2">
    <source>
        <dbReference type="UniProtKB" id="Q9H9V9"/>
    </source>
</evidence>
<evidence type="ECO:0000255" key="3">
    <source>
        <dbReference type="PROSITE-ProRule" id="PRU00538"/>
    </source>
</evidence>
<evidence type="ECO:0000305" key="4"/>
<protein>
    <recommendedName>
        <fullName evidence="2">2-oxoglutarate and iron-dependent oxygenase JMJD4</fullName>
        <ecNumber>1.14.11.-</ecNumber>
    </recommendedName>
    <alternativeName>
        <fullName>JmjC domain-containing protein 4</fullName>
    </alternativeName>
    <alternativeName>
        <fullName>Jumonji domain-containing protein 4</fullName>
    </alternativeName>
    <alternativeName>
        <fullName evidence="2">Lysyl-hydroxylase JMJD4</fullName>
    </alternativeName>
</protein>
<sequence length="422" mass="49892">MDRETFHSCSSLVKLPRQIHQQHCSSHFIEYIEREIPYSKFFKNYLIPNQPCMFSKKFTEEWNCRKKWVTAEGKPNLQRLLHEFDETPVPVANCSVKEYNANPKQIMPFKEFIQYWRESIQNGHSSPKGCLYLKDWHMQRNFPEHNIYKTPIYFSSDWLNEYWDTIEVDDYRFVYMGPKGSWTPFHADVFRSYSWSANICGRKKWLLYPPGQEDFLRDCHGNLAYDVTAPILQDKGLYAQFEEACQPLEIIQEAGEIIFVPSGWHHQVYNLEDTISINHNWLNGCNLDIMWQFLQDELSSVQREIEEWRDTMDTWHQHCQVIMKSCTGIDYAEFASFLKTIANNRISFLNSSPRNADSCQDLLAESLCALGPHHAAFDLQRVLHIFEIMLNNEDFKRLDPATLSFKPEDLLQEIREAIRTIV</sequence>
<keyword id="KW-0963">Cytoplasm</keyword>
<keyword id="KW-0223">Dioxygenase</keyword>
<keyword id="KW-0408">Iron</keyword>
<keyword id="KW-0479">Metal-binding</keyword>
<keyword id="KW-0560">Oxidoreductase</keyword>
<keyword id="KW-1185">Reference proteome</keyword>
<comment type="function">
    <text evidence="2">Catalyzes the 2-oxoglutarate and iron-dependent C4-lysyl hydroxylation of ETF1 at 'Lys-63' thereby promoting the translational termination efficiency of ETF1.</text>
</comment>
<comment type="catalytic activity">
    <reaction evidence="2">
        <text>L-lysyl-[protein] + 2-oxoglutarate + O2 = 4-hydroxy-L-lysyl-[protein] + succinate + CO2</text>
        <dbReference type="Rhea" id="RHEA:57156"/>
        <dbReference type="Rhea" id="RHEA-COMP:9752"/>
        <dbReference type="Rhea" id="RHEA-COMP:15084"/>
        <dbReference type="ChEBI" id="CHEBI:15379"/>
        <dbReference type="ChEBI" id="CHEBI:16526"/>
        <dbReference type="ChEBI" id="CHEBI:16810"/>
        <dbReference type="ChEBI" id="CHEBI:29969"/>
        <dbReference type="ChEBI" id="CHEBI:30031"/>
        <dbReference type="ChEBI" id="CHEBI:141495"/>
    </reaction>
</comment>
<comment type="cofactor">
    <cofactor evidence="2">
        <name>Fe(2+)</name>
        <dbReference type="ChEBI" id="CHEBI:29033"/>
    </cofactor>
</comment>
<comment type="subcellular location">
    <subcellularLocation>
        <location evidence="2">Cytoplasm</location>
    </subcellularLocation>
</comment>
<comment type="similarity">
    <text evidence="4">Belongs to the JMJD6 family.</text>
</comment>
<organism>
    <name type="scientific">Danio rerio</name>
    <name type="common">Zebrafish</name>
    <name type="synonym">Brachydanio rerio</name>
    <dbReference type="NCBI Taxonomy" id="7955"/>
    <lineage>
        <taxon>Eukaryota</taxon>
        <taxon>Metazoa</taxon>
        <taxon>Chordata</taxon>
        <taxon>Craniata</taxon>
        <taxon>Vertebrata</taxon>
        <taxon>Euteleostomi</taxon>
        <taxon>Actinopterygii</taxon>
        <taxon>Neopterygii</taxon>
        <taxon>Teleostei</taxon>
        <taxon>Ostariophysi</taxon>
        <taxon>Cypriniformes</taxon>
        <taxon>Danionidae</taxon>
        <taxon>Danioninae</taxon>
        <taxon>Danio</taxon>
    </lineage>
</organism>
<feature type="chain" id="PRO_0000291962" description="2-oxoglutarate and iron-dependent oxygenase JMJD4">
    <location>
        <begin position="1"/>
        <end position="422"/>
    </location>
</feature>
<feature type="domain" description="JmjC" evidence="3">
    <location>
        <begin position="139"/>
        <end position="298"/>
    </location>
</feature>
<feature type="binding site" evidence="1">
    <location>
        <position position="186"/>
    </location>
    <ligand>
        <name>Fe cation</name>
        <dbReference type="ChEBI" id="CHEBI:24875"/>
        <note>catalytic</note>
    </ligand>
</feature>
<feature type="binding site" evidence="1">
    <location>
        <position position="188"/>
    </location>
    <ligand>
        <name>Fe cation</name>
        <dbReference type="ChEBI" id="CHEBI:24875"/>
        <note>catalytic</note>
    </ligand>
</feature>
<feature type="binding site" evidence="1">
    <location>
        <position position="266"/>
    </location>
    <ligand>
        <name>Fe cation</name>
        <dbReference type="ChEBI" id="CHEBI:24875"/>
        <note>catalytic</note>
    </ligand>
</feature>
<reference key="1">
    <citation type="submission" date="2006-09" db="EMBL/GenBank/DDBJ databases">
        <authorList>
            <consortium name="NIH - Zebrafish Gene Collection (ZGC) project"/>
        </authorList>
    </citation>
    <scope>NUCLEOTIDE SEQUENCE [LARGE SCALE MRNA]</scope>
</reference>